<feature type="chain" id="PRO_0000149493" description="Adenine phosphoribosyltransferase">
    <location>
        <begin position="1"/>
        <end position="187"/>
    </location>
</feature>
<feature type="helix" evidence="3">
    <location>
        <begin position="7"/>
        <end position="18"/>
    </location>
</feature>
<feature type="strand" evidence="3">
    <location>
        <begin position="19"/>
        <end position="22"/>
    </location>
</feature>
<feature type="strand" evidence="2">
    <location>
        <begin position="25"/>
        <end position="27"/>
    </location>
</feature>
<feature type="strand" evidence="3">
    <location>
        <begin position="32"/>
        <end position="34"/>
    </location>
</feature>
<feature type="helix" evidence="3">
    <location>
        <begin position="36"/>
        <end position="39"/>
    </location>
</feature>
<feature type="helix" evidence="3">
    <location>
        <begin position="42"/>
        <end position="55"/>
    </location>
</feature>
<feature type="turn" evidence="3">
    <location>
        <begin position="56"/>
        <end position="58"/>
    </location>
</feature>
<feature type="strand" evidence="3">
    <location>
        <begin position="63"/>
        <end position="67"/>
    </location>
</feature>
<feature type="helix" evidence="3">
    <location>
        <begin position="70"/>
        <end position="82"/>
    </location>
</feature>
<feature type="strand" evidence="3">
    <location>
        <begin position="85"/>
        <end position="91"/>
    </location>
</feature>
<feature type="strand" evidence="3">
    <location>
        <begin position="99"/>
        <end position="106"/>
    </location>
</feature>
<feature type="strand" evidence="3">
    <location>
        <begin position="109"/>
        <end position="116"/>
    </location>
</feature>
<feature type="helix" evidence="3">
    <location>
        <begin position="117"/>
        <end position="119"/>
    </location>
</feature>
<feature type="strand" evidence="3">
    <location>
        <begin position="125"/>
        <end position="135"/>
    </location>
</feature>
<feature type="helix" evidence="3">
    <location>
        <begin position="137"/>
        <end position="148"/>
    </location>
</feature>
<feature type="strand" evidence="3">
    <location>
        <begin position="152"/>
        <end position="161"/>
    </location>
</feature>
<feature type="helix" evidence="3">
    <location>
        <begin position="163"/>
        <end position="165"/>
    </location>
</feature>
<feature type="helix" evidence="3">
    <location>
        <begin position="167"/>
        <end position="172"/>
    </location>
</feature>
<feature type="turn" evidence="3">
    <location>
        <begin position="173"/>
        <end position="175"/>
    </location>
</feature>
<feature type="strand" evidence="3">
    <location>
        <begin position="177"/>
        <end position="183"/>
    </location>
</feature>
<keyword id="KW-0002">3D-structure</keyword>
<keyword id="KW-0963">Cytoplasm</keyword>
<keyword id="KW-0328">Glycosyltransferase</keyword>
<keyword id="KW-0660">Purine salvage</keyword>
<keyword id="KW-0808">Transferase</keyword>
<name>APT_YERPS</name>
<evidence type="ECO:0000255" key="1">
    <source>
        <dbReference type="HAMAP-Rule" id="MF_00004"/>
    </source>
</evidence>
<evidence type="ECO:0007829" key="2">
    <source>
        <dbReference type="PDB" id="5ZC7"/>
    </source>
</evidence>
<evidence type="ECO:0007829" key="3">
    <source>
        <dbReference type="PDB" id="5ZNQ"/>
    </source>
</evidence>
<protein>
    <recommendedName>
        <fullName evidence="1">Adenine phosphoribosyltransferase</fullName>
        <shortName evidence="1">APRT</shortName>
        <ecNumber evidence="1">2.4.2.7</ecNumber>
    </recommendedName>
</protein>
<gene>
    <name evidence="1" type="primary">apt</name>
    <name type="ordered locus">YPTB0991</name>
</gene>
<organism>
    <name type="scientific">Yersinia pseudotuberculosis serotype I (strain IP32953)</name>
    <dbReference type="NCBI Taxonomy" id="273123"/>
    <lineage>
        <taxon>Bacteria</taxon>
        <taxon>Pseudomonadati</taxon>
        <taxon>Pseudomonadota</taxon>
        <taxon>Gammaproteobacteria</taxon>
        <taxon>Enterobacterales</taxon>
        <taxon>Yersiniaceae</taxon>
        <taxon>Yersinia</taxon>
    </lineage>
</organism>
<accession>Q66DQ2</accession>
<dbReference type="EC" id="2.4.2.7" evidence="1"/>
<dbReference type="EMBL" id="BX936398">
    <property type="protein sequence ID" value="CAH20231.1"/>
    <property type="molecule type" value="Genomic_DNA"/>
</dbReference>
<dbReference type="RefSeq" id="WP_011191877.1">
    <property type="nucleotide sequence ID" value="NC_006155.1"/>
</dbReference>
<dbReference type="PDB" id="4MB6">
    <property type="method" value="X-ray"/>
    <property type="resolution" value="1.81 A"/>
    <property type="chains" value="A=1-187"/>
</dbReference>
<dbReference type="PDB" id="5B6H">
    <property type="method" value="X-ray"/>
    <property type="resolution" value="1.90 A"/>
    <property type="chains" value="A=7-187"/>
</dbReference>
<dbReference type="PDB" id="5Y07">
    <property type="method" value="X-ray"/>
    <property type="resolution" value="2.07 A"/>
    <property type="chains" value="A/B=1-187"/>
</dbReference>
<dbReference type="PDB" id="5Y4A">
    <property type="method" value="X-ray"/>
    <property type="resolution" value="2.34 A"/>
    <property type="chains" value="A/B=1-187"/>
</dbReference>
<dbReference type="PDB" id="5ZC7">
    <property type="method" value="X-ray"/>
    <property type="resolution" value="2.00 A"/>
    <property type="chains" value="A/B=1-187"/>
</dbReference>
<dbReference type="PDB" id="5ZMI">
    <property type="method" value="X-ray"/>
    <property type="resolution" value="2.05 A"/>
    <property type="chains" value="A=1-187"/>
</dbReference>
<dbReference type="PDB" id="5ZNQ">
    <property type="method" value="X-ray"/>
    <property type="resolution" value="1.75 A"/>
    <property type="chains" value="A/B=1-187"/>
</dbReference>
<dbReference type="PDB" id="5ZOC">
    <property type="method" value="X-ray"/>
    <property type="resolution" value="1.98 A"/>
    <property type="chains" value="A=1-187"/>
</dbReference>
<dbReference type="PDBsum" id="4MB6"/>
<dbReference type="PDBsum" id="5B6H"/>
<dbReference type="PDBsum" id="5Y07"/>
<dbReference type="PDBsum" id="5Y4A"/>
<dbReference type="PDBsum" id="5ZC7"/>
<dbReference type="PDBsum" id="5ZMI"/>
<dbReference type="PDBsum" id="5ZNQ"/>
<dbReference type="PDBsum" id="5ZOC"/>
<dbReference type="SMR" id="Q66DQ2"/>
<dbReference type="KEGG" id="ypo:BZ17_1557"/>
<dbReference type="KEGG" id="yps:YPTB0991"/>
<dbReference type="PATRIC" id="fig|273123.14.peg.1652"/>
<dbReference type="UniPathway" id="UPA00588">
    <property type="reaction ID" value="UER00646"/>
</dbReference>
<dbReference type="EvolutionaryTrace" id="Q66DQ2"/>
<dbReference type="Proteomes" id="UP000001011">
    <property type="component" value="Chromosome"/>
</dbReference>
<dbReference type="GO" id="GO:0005829">
    <property type="term" value="C:cytosol"/>
    <property type="evidence" value="ECO:0007669"/>
    <property type="project" value="TreeGrafter"/>
</dbReference>
<dbReference type="GO" id="GO:0003999">
    <property type="term" value="F:adenine phosphoribosyltransferase activity"/>
    <property type="evidence" value="ECO:0007669"/>
    <property type="project" value="UniProtKB-UniRule"/>
</dbReference>
<dbReference type="GO" id="GO:0006168">
    <property type="term" value="P:adenine salvage"/>
    <property type="evidence" value="ECO:0007669"/>
    <property type="project" value="InterPro"/>
</dbReference>
<dbReference type="GO" id="GO:0044209">
    <property type="term" value="P:AMP salvage"/>
    <property type="evidence" value="ECO:0007669"/>
    <property type="project" value="UniProtKB-UniRule"/>
</dbReference>
<dbReference type="GO" id="GO:0006166">
    <property type="term" value="P:purine ribonucleoside salvage"/>
    <property type="evidence" value="ECO:0007669"/>
    <property type="project" value="UniProtKB-KW"/>
</dbReference>
<dbReference type="CDD" id="cd06223">
    <property type="entry name" value="PRTases_typeI"/>
    <property type="match status" value="1"/>
</dbReference>
<dbReference type="FunFam" id="3.40.50.2020:FF:000004">
    <property type="entry name" value="Adenine phosphoribosyltransferase"/>
    <property type="match status" value="1"/>
</dbReference>
<dbReference type="Gene3D" id="3.40.50.2020">
    <property type="match status" value="1"/>
</dbReference>
<dbReference type="HAMAP" id="MF_00004">
    <property type="entry name" value="Aden_phosphoribosyltr"/>
    <property type="match status" value="1"/>
</dbReference>
<dbReference type="InterPro" id="IPR005764">
    <property type="entry name" value="Ade_phspho_trans"/>
</dbReference>
<dbReference type="InterPro" id="IPR050120">
    <property type="entry name" value="Adenine_PRTase"/>
</dbReference>
<dbReference type="InterPro" id="IPR000836">
    <property type="entry name" value="PRibTrfase_dom"/>
</dbReference>
<dbReference type="InterPro" id="IPR029057">
    <property type="entry name" value="PRTase-like"/>
</dbReference>
<dbReference type="NCBIfam" id="TIGR01090">
    <property type="entry name" value="apt"/>
    <property type="match status" value="1"/>
</dbReference>
<dbReference type="NCBIfam" id="NF002632">
    <property type="entry name" value="PRK02304.1-1"/>
    <property type="match status" value="1"/>
</dbReference>
<dbReference type="NCBIfam" id="NF002633">
    <property type="entry name" value="PRK02304.1-2"/>
    <property type="match status" value="1"/>
</dbReference>
<dbReference type="NCBIfam" id="NF002634">
    <property type="entry name" value="PRK02304.1-3"/>
    <property type="match status" value="1"/>
</dbReference>
<dbReference type="NCBIfam" id="NF002636">
    <property type="entry name" value="PRK02304.1-5"/>
    <property type="match status" value="1"/>
</dbReference>
<dbReference type="PANTHER" id="PTHR11776">
    <property type="entry name" value="ADENINE PHOSPHORIBOSYLTRANSFERASE"/>
    <property type="match status" value="1"/>
</dbReference>
<dbReference type="PANTHER" id="PTHR11776:SF7">
    <property type="entry name" value="PHOSPHORIBOSYLTRANSFERASE DOMAIN-CONTAINING PROTEIN"/>
    <property type="match status" value="1"/>
</dbReference>
<dbReference type="Pfam" id="PF00156">
    <property type="entry name" value="Pribosyltran"/>
    <property type="match status" value="1"/>
</dbReference>
<dbReference type="SUPFAM" id="SSF53271">
    <property type="entry name" value="PRTase-like"/>
    <property type="match status" value="1"/>
</dbReference>
<dbReference type="PROSITE" id="PS00103">
    <property type="entry name" value="PUR_PYR_PR_TRANSFER"/>
    <property type="match status" value="1"/>
</dbReference>
<reference key="1">
    <citation type="journal article" date="2004" name="Proc. Natl. Acad. Sci. U.S.A.">
        <title>Insights into the evolution of Yersinia pestis through whole-genome comparison with Yersinia pseudotuberculosis.</title>
        <authorList>
            <person name="Chain P.S.G."/>
            <person name="Carniel E."/>
            <person name="Larimer F.W."/>
            <person name="Lamerdin J."/>
            <person name="Stoutland P.O."/>
            <person name="Regala W.M."/>
            <person name="Georgescu A.M."/>
            <person name="Vergez L.M."/>
            <person name="Land M.L."/>
            <person name="Motin V.L."/>
            <person name="Brubaker R.R."/>
            <person name="Fowler J."/>
            <person name="Hinnebusch J."/>
            <person name="Marceau M."/>
            <person name="Medigue C."/>
            <person name="Simonet M."/>
            <person name="Chenal-Francisque V."/>
            <person name="Souza B."/>
            <person name="Dacheux D."/>
            <person name="Elliott J.M."/>
            <person name="Derbise A."/>
            <person name="Hauser L.J."/>
            <person name="Garcia E."/>
        </authorList>
    </citation>
    <scope>NUCLEOTIDE SEQUENCE [LARGE SCALE GENOMIC DNA]</scope>
    <source>
        <strain>IP32953</strain>
    </source>
</reference>
<proteinExistence type="evidence at protein level"/>
<sequence length="187" mass="20143">MTVSASKTAQQLKYIKDSIKTIPDYPKAGILFRDVTSLLENPKAYSASIELLSEHYSESGVTKVVGTEARGFLFGAPVALALGVGFVPVRKPGKLPRETISESYELEYGTDTLEIHTDSIQPGDKVLVVDDLLATGGTIEATVKLIRRLGGEVVHAAFIINLPELGGEARLTQQGIHCYSLVSFDGH</sequence>
<comment type="function">
    <text evidence="1">Catalyzes a salvage reaction resulting in the formation of AMP, that is energically less costly than de novo synthesis.</text>
</comment>
<comment type="catalytic activity">
    <reaction evidence="1">
        <text>AMP + diphosphate = 5-phospho-alpha-D-ribose 1-diphosphate + adenine</text>
        <dbReference type="Rhea" id="RHEA:16609"/>
        <dbReference type="ChEBI" id="CHEBI:16708"/>
        <dbReference type="ChEBI" id="CHEBI:33019"/>
        <dbReference type="ChEBI" id="CHEBI:58017"/>
        <dbReference type="ChEBI" id="CHEBI:456215"/>
        <dbReference type="EC" id="2.4.2.7"/>
    </reaction>
</comment>
<comment type="pathway">
    <text evidence="1">Purine metabolism; AMP biosynthesis via salvage pathway; AMP from adenine: step 1/1.</text>
</comment>
<comment type="subunit">
    <text evidence="1">Homodimer.</text>
</comment>
<comment type="subcellular location">
    <subcellularLocation>
        <location evidence="1">Cytoplasm</location>
    </subcellularLocation>
</comment>
<comment type="similarity">
    <text evidence="1">Belongs to the purine/pyrimidine phosphoribosyltransferase family.</text>
</comment>